<organismHost>
    <name type="scientific">Camelus</name>
    <dbReference type="NCBI Taxonomy" id="9836"/>
</organismHost>
<protein>
    <recommendedName>
        <fullName>Deoxyuridine 5'-triphosphate nucleotidohydrolase</fullName>
        <shortName>dUTPase</shortName>
        <ecNumber>3.6.1.23</ecNumber>
    </recommendedName>
    <alternativeName>
        <fullName>dUTP pyrophosphatase</fullName>
    </alternativeName>
</protein>
<comment type="function">
    <text evidence="2">This enzyme is involved in nucleotide metabolism: it produces dUMP, the immediate precursor of thymidine nucleotides and it decreases the intracellular concentration of dUTP so that uracil cannot be incorporated into DNA.</text>
</comment>
<comment type="catalytic activity">
    <reaction evidence="2">
        <text>dUTP + H2O = dUMP + diphosphate + H(+)</text>
        <dbReference type="Rhea" id="RHEA:10248"/>
        <dbReference type="ChEBI" id="CHEBI:15377"/>
        <dbReference type="ChEBI" id="CHEBI:15378"/>
        <dbReference type="ChEBI" id="CHEBI:33019"/>
        <dbReference type="ChEBI" id="CHEBI:61555"/>
        <dbReference type="ChEBI" id="CHEBI:246422"/>
        <dbReference type="EC" id="3.6.1.23"/>
    </reaction>
    <physiologicalReaction direction="left-to-right" evidence="2">
        <dbReference type="Rhea" id="RHEA:10249"/>
    </physiologicalReaction>
</comment>
<comment type="cofactor">
    <cofactor evidence="1">
        <name>Mg(2+)</name>
        <dbReference type="ChEBI" id="CHEBI:18420"/>
    </cofactor>
</comment>
<comment type="induction">
    <text evidence="2">Expressed in the early phase of the viral replicative cycle.</text>
</comment>
<comment type="similarity">
    <text evidence="3">Belongs to the dUTPase family.</text>
</comment>
<name>DUT_CAMPS</name>
<proteinExistence type="inferred from homology"/>
<organism>
    <name type="scientific">Camelpox virus (strain CMS)</name>
    <dbReference type="NCBI Taxonomy" id="203172"/>
    <lineage>
        <taxon>Viruses</taxon>
        <taxon>Varidnaviria</taxon>
        <taxon>Bamfordvirae</taxon>
        <taxon>Nucleocytoviricota</taxon>
        <taxon>Pokkesviricetes</taxon>
        <taxon>Chitovirales</taxon>
        <taxon>Poxviridae</taxon>
        <taxon>Chordopoxvirinae</taxon>
        <taxon>Orthopoxvirus</taxon>
        <taxon>Camelpox virus</taxon>
    </lineage>
</organism>
<sequence>MFNMNINSPVRFVKETNRAKSPTRQSPYAAGYDLYSAYYYTIPPGERQLIKTDISMSMPKFCYGRIAPRSGLSLKGIDIGGGVIDEDYRGNIGVILINNGKCTFNVNTGDRIAQLIYQRIYYPELKEVQSLDSTDRGDQGFGSTGLR</sequence>
<keyword id="KW-0244">Early protein</keyword>
<keyword id="KW-0378">Hydrolase</keyword>
<keyword id="KW-0460">Magnesium</keyword>
<keyword id="KW-0479">Metal-binding</keyword>
<keyword id="KW-0546">Nucleotide metabolism</keyword>
<keyword id="KW-1185">Reference proteome</keyword>
<gene>
    <name type="primary">OPG046</name>
    <name type="synonym">DUT</name>
    <name type="ordered locus">CMP37L</name>
</gene>
<feature type="chain" id="PRO_0000182945" description="Deoxyuridine 5'-triphosphate nucleotidohydrolase">
    <location>
        <begin position="1"/>
        <end position="147"/>
    </location>
</feature>
<feature type="binding site" evidence="2">
    <location>
        <position position="24"/>
    </location>
    <ligand>
        <name>Mg(2+)</name>
        <dbReference type="ChEBI" id="CHEBI:18420"/>
    </ligand>
</feature>
<feature type="binding site" evidence="2">
    <location>
        <begin position="68"/>
        <end position="70"/>
    </location>
    <ligand>
        <name>dUTP</name>
        <dbReference type="ChEBI" id="CHEBI:61555"/>
    </ligand>
</feature>
<feature type="binding site" evidence="2">
    <location>
        <begin position="82"/>
        <end position="85"/>
    </location>
    <ligand>
        <name>dUTP</name>
        <dbReference type="ChEBI" id="CHEBI:61555"/>
    </ligand>
</feature>
<feature type="binding site" evidence="2">
    <location>
        <position position="88"/>
    </location>
    <ligand>
        <name>dUTP</name>
        <dbReference type="ChEBI" id="CHEBI:61555"/>
    </ligand>
</feature>
<feature type="binding site" evidence="2">
    <location>
        <position position="93"/>
    </location>
    <ligand>
        <name>dUTP</name>
        <dbReference type="ChEBI" id="CHEBI:61555"/>
    </ligand>
</feature>
<feature type="binding site" evidence="2">
    <location>
        <position position="95"/>
    </location>
    <ligand>
        <name>dUTP</name>
        <dbReference type="ChEBI" id="CHEBI:61555"/>
    </ligand>
</feature>
<feature type="binding site" evidence="2">
    <location>
        <position position="111"/>
    </location>
    <ligand>
        <name>dUTP</name>
        <dbReference type="ChEBI" id="CHEBI:61555"/>
    </ligand>
</feature>
<reference key="1">
    <citation type="journal article" date="2002" name="J. Gen. Virol.">
        <title>The sequence of camelpox virus shows it is most closely related to variola virus, the cause of smallpox.</title>
        <authorList>
            <person name="Gubser C."/>
            <person name="Smith G.L."/>
        </authorList>
    </citation>
    <scope>NUCLEOTIDE SEQUENCE [LARGE SCALE GENOMIC DNA]</scope>
</reference>
<accession>Q775Z7</accession>
<evidence type="ECO:0000250" key="1"/>
<evidence type="ECO:0000250" key="2">
    <source>
        <dbReference type="UniProtKB" id="P17374"/>
    </source>
</evidence>
<evidence type="ECO:0000305" key="3"/>
<dbReference type="EC" id="3.6.1.23"/>
<dbReference type="EMBL" id="AY009089">
    <property type="protein sequence ID" value="AAG37494.1"/>
    <property type="molecule type" value="Genomic_DNA"/>
</dbReference>
<dbReference type="SMR" id="Q775Z7"/>
<dbReference type="Proteomes" id="UP000107153">
    <property type="component" value="Genome"/>
</dbReference>
<dbReference type="GO" id="GO:0004170">
    <property type="term" value="F:dUTP diphosphatase activity"/>
    <property type="evidence" value="ECO:0007669"/>
    <property type="project" value="UniProtKB-EC"/>
</dbReference>
<dbReference type="GO" id="GO:0000287">
    <property type="term" value="F:magnesium ion binding"/>
    <property type="evidence" value="ECO:0007669"/>
    <property type="project" value="InterPro"/>
</dbReference>
<dbReference type="GO" id="GO:0006226">
    <property type="term" value="P:dUMP biosynthetic process"/>
    <property type="evidence" value="ECO:0007669"/>
    <property type="project" value="InterPro"/>
</dbReference>
<dbReference type="GO" id="GO:0046081">
    <property type="term" value="P:dUTP catabolic process"/>
    <property type="evidence" value="ECO:0007669"/>
    <property type="project" value="InterPro"/>
</dbReference>
<dbReference type="CDD" id="cd07557">
    <property type="entry name" value="trimeric_dUTPase"/>
    <property type="match status" value="1"/>
</dbReference>
<dbReference type="Gene3D" id="2.70.40.10">
    <property type="match status" value="1"/>
</dbReference>
<dbReference type="InterPro" id="IPR008181">
    <property type="entry name" value="dUTPase"/>
</dbReference>
<dbReference type="InterPro" id="IPR029054">
    <property type="entry name" value="dUTPase-like"/>
</dbReference>
<dbReference type="InterPro" id="IPR036157">
    <property type="entry name" value="dUTPase-like_sf"/>
</dbReference>
<dbReference type="InterPro" id="IPR033704">
    <property type="entry name" value="dUTPase_trimeric"/>
</dbReference>
<dbReference type="NCBIfam" id="TIGR00576">
    <property type="entry name" value="dut"/>
    <property type="match status" value="1"/>
</dbReference>
<dbReference type="NCBIfam" id="NF001862">
    <property type="entry name" value="PRK00601.1"/>
    <property type="match status" value="1"/>
</dbReference>
<dbReference type="PANTHER" id="PTHR11241">
    <property type="entry name" value="DEOXYURIDINE 5'-TRIPHOSPHATE NUCLEOTIDOHYDROLASE"/>
    <property type="match status" value="1"/>
</dbReference>
<dbReference type="PANTHER" id="PTHR11241:SF0">
    <property type="entry name" value="DEOXYURIDINE 5'-TRIPHOSPHATE NUCLEOTIDOHYDROLASE"/>
    <property type="match status" value="1"/>
</dbReference>
<dbReference type="Pfam" id="PF00692">
    <property type="entry name" value="dUTPase"/>
    <property type="match status" value="1"/>
</dbReference>
<dbReference type="SUPFAM" id="SSF51283">
    <property type="entry name" value="dUTPase-like"/>
    <property type="match status" value="1"/>
</dbReference>